<evidence type="ECO:0000250" key="1"/>
<evidence type="ECO:0000256" key="2">
    <source>
        <dbReference type="SAM" id="MobiDB-lite"/>
    </source>
</evidence>
<evidence type="ECO:0000305" key="3"/>
<evidence type="ECO:0000312" key="4">
    <source>
        <dbReference type="WormBase" id="C37A2.7"/>
    </source>
</evidence>
<comment type="function">
    <text>Plays an important role in the elongation step of protein synthesis.</text>
</comment>
<comment type="subunit">
    <text evidence="1">P1 and P2 exist as dimers at the large ribosomal subunit.</text>
</comment>
<comment type="PTM">
    <text evidence="1">Phosphorylated.</text>
</comment>
<comment type="similarity">
    <text evidence="3">Belongs to the eukaryotic ribosomal protein P1/P2 family.</text>
</comment>
<sequence length="107" mass="10813">MKYLGAYLLATLGGNASPSAQDVLKVLEAGGLDCDMENANSVVDALKGKTISEVIAQGKVKLSSVPSGGSAPAAAAPSGGAAPKAEEKKKEEPKEESDDDMGFGLFD</sequence>
<dbReference type="EMBL" id="FO080805">
    <property type="protein sequence ID" value="CCD66926.1"/>
    <property type="molecule type" value="Genomic_DNA"/>
</dbReference>
<dbReference type="PIR" id="T30159">
    <property type="entry name" value="T30159"/>
</dbReference>
<dbReference type="SMR" id="O01504"/>
<dbReference type="BioGRID" id="37849">
    <property type="interactions" value="92"/>
</dbReference>
<dbReference type="DIP" id="DIP-24496N"/>
<dbReference type="FunCoup" id="O01504">
    <property type="interactions" value="1316"/>
</dbReference>
<dbReference type="IntAct" id="O01504">
    <property type="interactions" value="1"/>
</dbReference>
<dbReference type="STRING" id="6239.C37A2.7.1"/>
<dbReference type="PaxDb" id="6239-C37A2.7"/>
<dbReference type="PeptideAtlas" id="O01504"/>
<dbReference type="EnsemblMetazoa" id="C37A2.7.1">
    <property type="protein sequence ID" value="C37A2.7.1"/>
    <property type="gene ID" value="WBGene00016493"/>
</dbReference>
<dbReference type="KEGG" id="cel:CELE_C37A2.7"/>
<dbReference type="UCSC" id="M04F3.1.1">
    <property type="organism name" value="c. elegans"/>
</dbReference>
<dbReference type="AGR" id="WB:WBGene00016493"/>
<dbReference type="CTD" id="172401"/>
<dbReference type="WormBase" id="C37A2.7">
    <property type="protein sequence ID" value="CE30433"/>
    <property type="gene ID" value="WBGene00016493"/>
    <property type="gene designation" value="rplp-2.1"/>
</dbReference>
<dbReference type="eggNOG" id="KOG3449">
    <property type="taxonomic scope" value="Eukaryota"/>
</dbReference>
<dbReference type="GeneTree" id="ENSGT00550000074828"/>
<dbReference type="HOGENOM" id="CLU_114656_0_2_1"/>
<dbReference type="InParanoid" id="O01504"/>
<dbReference type="OMA" id="CTIGHEK"/>
<dbReference type="OrthoDB" id="1227494at2759"/>
<dbReference type="PhylomeDB" id="O01504"/>
<dbReference type="Reactome" id="R-CEL-156827">
    <property type="pathway name" value="L13a-mediated translational silencing of Ceruloplasmin expression"/>
</dbReference>
<dbReference type="Reactome" id="R-CEL-1799339">
    <property type="pathway name" value="SRP-dependent cotranslational protein targeting to membrane"/>
</dbReference>
<dbReference type="Reactome" id="R-CEL-72689">
    <property type="pathway name" value="Formation of a pool of free 40S subunits"/>
</dbReference>
<dbReference type="Reactome" id="R-CEL-72706">
    <property type="pathway name" value="GTP hydrolysis and joining of the 60S ribosomal subunit"/>
</dbReference>
<dbReference type="Reactome" id="R-CEL-975956">
    <property type="pathway name" value="Nonsense Mediated Decay (NMD) independent of the Exon Junction Complex (EJC)"/>
</dbReference>
<dbReference type="Reactome" id="R-CEL-975957">
    <property type="pathway name" value="Nonsense Mediated Decay (NMD) enhanced by the Exon Junction Complex (EJC)"/>
</dbReference>
<dbReference type="PRO" id="PR:O01504"/>
<dbReference type="Proteomes" id="UP000001940">
    <property type="component" value="Chromosome I"/>
</dbReference>
<dbReference type="Bgee" id="WBGene00016493">
    <property type="expression patterns" value="Expressed in germ line (C elegans) and 4 other cell types or tissues"/>
</dbReference>
<dbReference type="GO" id="GO:0022625">
    <property type="term" value="C:cytosolic large ribosomal subunit"/>
    <property type="evidence" value="ECO:0007669"/>
    <property type="project" value="InterPro"/>
</dbReference>
<dbReference type="GO" id="GO:0003735">
    <property type="term" value="F:structural constituent of ribosome"/>
    <property type="evidence" value="ECO:0007669"/>
    <property type="project" value="InterPro"/>
</dbReference>
<dbReference type="GO" id="GO:0002182">
    <property type="term" value="P:cytoplasmic translational elongation"/>
    <property type="evidence" value="ECO:0007669"/>
    <property type="project" value="InterPro"/>
</dbReference>
<dbReference type="CDD" id="cd05833">
    <property type="entry name" value="Ribosomal_P2"/>
    <property type="match status" value="1"/>
</dbReference>
<dbReference type="FunFam" id="1.10.10.1410:FF:000002">
    <property type="entry name" value="60S acidic ribosomal protein P2"/>
    <property type="match status" value="1"/>
</dbReference>
<dbReference type="Gene3D" id="1.10.10.1410">
    <property type="match status" value="1"/>
</dbReference>
<dbReference type="HAMAP" id="MF_01478">
    <property type="entry name" value="Ribosomal_L12_arch"/>
    <property type="match status" value="1"/>
</dbReference>
<dbReference type="InterPro" id="IPR038716">
    <property type="entry name" value="P1/P2_N_sf"/>
</dbReference>
<dbReference type="InterPro" id="IPR027534">
    <property type="entry name" value="Ribosomal_P1/P2"/>
</dbReference>
<dbReference type="InterPro" id="IPR044076">
    <property type="entry name" value="Ribosomal_P2"/>
</dbReference>
<dbReference type="PANTHER" id="PTHR21141">
    <property type="entry name" value="60S ACIDIC RIBOSOMAL PROTEIN FAMILY MEMBER"/>
    <property type="match status" value="1"/>
</dbReference>
<dbReference type="PANTHER" id="PTHR21141:SF5">
    <property type="entry name" value="LARGE RIBOSOMAL SUBUNIT PROTEIN P2"/>
    <property type="match status" value="1"/>
</dbReference>
<dbReference type="Pfam" id="PF00428">
    <property type="entry name" value="Ribosomal_60s"/>
    <property type="match status" value="1"/>
</dbReference>
<proteinExistence type="inferred from homology"/>
<organism>
    <name type="scientific">Caenorhabditis elegans</name>
    <dbReference type="NCBI Taxonomy" id="6239"/>
    <lineage>
        <taxon>Eukaryota</taxon>
        <taxon>Metazoa</taxon>
        <taxon>Ecdysozoa</taxon>
        <taxon>Nematoda</taxon>
        <taxon>Chromadorea</taxon>
        <taxon>Rhabditida</taxon>
        <taxon>Rhabditina</taxon>
        <taxon>Rhabditomorpha</taxon>
        <taxon>Rhabditoidea</taxon>
        <taxon>Rhabditidae</taxon>
        <taxon>Peloderinae</taxon>
        <taxon>Caenorhabditis</taxon>
    </lineage>
</organism>
<gene>
    <name evidence="4" type="primary">rplp-2.1</name>
    <name evidence="4" type="ORF">C37A2.7</name>
</gene>
<accession>O01504</accession>
<name>RLA2_CAEEL</name>
<protein>
    <recommendedName>
        <fullName evidence="3">Large ribosomal subunit protein P2</fullName>
    </recommendedName>
    <alternativeName>
        <fullName>60S acidic ribosomal protein P2</fullName>
    </alternativeName>
    <alternativeName>
        <fullName evidence="4">Ribosomal protein lateral stalk subunit P2A</fullName>
    </alternativeName>
</protein>
<feature type="chain" id="PRO_0000157649" description="Large ribosomal subunit protein P2">
    <location>
        <begin position="1"/>
        <end position="107"/>
    </location>
</feature>
<feature type="region of interest" description="Disordered" evidence="2">
    <location>
        <begin position="63"/>
        <end position="107"/>
    </location>
</feature>
<feature type="compositionally biased region" description="Low complexity" evidence="2">
    <location>
        <begin position="63"/>
        <end position="83"/>
    </location>
</feature>
<feature type="compositionally biased region" description="Basic and acidic residues" evidence="2">
    <location>
        <begin position="84"/>
        <end position="93"/>
    </location>
</feature>
<reference key="1">
    <citation type="journal article" date="1998" name="Science">
        <title>Genome sequence of the nematode C. elegans: a platform for investigating biology.</title>
        <authorList>
            <consortium name="The C. elegans sequencing consortium"/>
        </authorList>
    </citation>
    <scope>NUCLEOTIDE SEQUENCE [LARGE SCALE GENOMIC DNA]</scope>
    <source>
        <strain>Bristol N2</strain>
    </source>
</reference>
<keyword id="KW-0597">Phosphoprotein</keyword>
<keyword id="KW-1185">Reference proteome</keyword>
<keyword id="KW-0687">Ribonucleoprotein</keyword>
<keyword id="KW-0689">Ribosomal protein</keyword>